<sequence length="190" mass="21465">MAKATTIKEALSRWEEKTGQKPSDAKEIKLYAQIPPIEKMDASLSTLGNCEKLSLSTNCIEKIANLNGLKNLRILSLGRNNIKNLNGLEAVGETLEELWISYNFIEKLKGIHVMKKLKILYMSNNLVKDWAEFLKLAELPCLEDLVFVGNPLEEKHSAEGNWIDEATKRVPKLKKLDGTPVIKEDEEEES</sequence>
<gene>
    <name type="primary">Dnal1</name>
    <name type="synonym">Dnalc1</name>
</gene>
<dbReference type="EMBL" id="AK005826">
    <property type="protein sequence ID" value="BAB24259.1"/>
    <property type="molecule type" value="mRNA"/>
</dbReference>
<dbReference type="EMBL" id="BC125392">
    <property type="protein sequence ID" value="AAI25393.1"/>
    <property type="molecule type" value="mRNA"/>
</dbReference>
<dbReference type="EMBL" id="BC125394">
    <property type="protein sequence ID" value="AAI25395.2"/>
    <property type="status" value="ALT_INIT"/>
    <property type="molecule type" value="mRNA"/>
</dbReference>
<dbReference type="EMBL" id="BG916281">
    <property type="status" value="NOT_ANNOTATED_CDS"/>
    <property type="molecule type" value="mRNA"/>
</dbReference>
<dbReference type="CCDS" id="CCDS26039.2">
    <molecule id="Q05A62-1"/>
</dbReference>
<dbReference type="CCDS" id="CCDS83987.1">
    <molecule id="Q05A62-3"/>
</dbReference>
<dbReference type="RefSeq" id="NP_001333457.1">
    <molecule id="Q05A62-3"/>
    <property type="nucleotide sequence ID" value="NM_001346528.1"/>
</dbReference>
<dbReference type="RefSeq" id="NP_083097.2">
    <molecule id="Q05A62-1"/>
    <property type="nucleotide sequence ID" value="NM_028821.3"/>
</dbReference>
<dbReference type="SMR" id="Q05A62"/>
<dbReference type="BioGRID" id="222746">
    <property type="interactions" value="1"/>
</dbReference>
<dbReference type="FunCoup" id="Q05A62">
    <property type="interactions" value="570"/>
</dbReference>
<dbReference type="STRING" id="10090.ENSMUSP00000121038"/>
<dbReference type="iPTMnet" id="Q05A62"/>
<dbReference type="PhosphoSitePlus" id="Q05A62"/>
<dbReference type="SwissPalm" id="Q05A62"/>
<dbReference type="PaxDb" id="10090-ENSMUSP00000121038"/>
<dbReference type="ProteomicsDB" id="277472">
    <molecule id="Q05A62-1"/>
</dbReference>
<dbReference type="ProteomicsDB" id="277473">
    <molecule id="Q05A62-2"/>
</dbReference>
<dbReference type="ProteomicsDB" id="277474">
    <molecule id="Q05A62-3"/>
</dbReference>
<dbReference type="Pumba" id="Q05A62"/>
<dbReference type="Antibodypedia" id="25408">
    <property type="antibodies" value="233 antibodies from 32 providers"/>
</dbReference>
<dbReference type="DNASU" id="105000"/>
<dbReference type="Ensembl" id="ENSMUST00000046340.9">
    <molecule id="Q05A62-3"/>
    <property type="protein sequence ID" value="ENSMUSP00000037076.3"/>
    <property type="gene ID" value="ENSMUSG00000042523.13"/>
</dbReference>
<dbReference type="Ensembl" id="ENSMUST00000123491.8">
    <molecule id="Q05A62-1"/>
    <property type="protein sequence ID" value="ENSMUSP00000121038.2"/>
    <property type="gene ID" value="ENSMUSG00000042523.13"/>
</dbReference>
<dbReference type="GeneID" id="105000"/>
<dbReference type="KEGG" id="mmu:105000"/>
<dbReference type="UCSC" id="uc007oek.2">
    <molecule id="Q05A62-1"/>
    <property type="organism name" value="mouse"/>
</dbReference>
<dbReference type="UCSC" id="uc011yot.1">
    <molecule id="Q05A62-2"/>
    <property type="organism name" value="mouse"/>
</dbReference>
<dbReference type="AGR" id="MGI:1921462"/>
<dbReference type="CTD" id="83544"/>
<dbReference type="MGI" id="MGI:1921462">
    <property type="gene designation" value="Dnal1"/>
</dbReference>
<dbReference type="VEuPathDB" id="HostDB:ENSMUSG00000042523"/>
<dbReference type="eggNOG" id="KOG0531">
    <property type="taxonomic scope" value="Eukaryota"/>
</dbReference>
<dbReference type="GeneTree" id="ENSGT00390000016904"/>
<dbReference type="HOGENOM" id="CLU_092189_0_0_1"/>
<dbReference type="InParanoid" id="Q05A62"/>
<dbReference type="OMA" id="ESIWRAE"/>
<dbReference type="OrthoDB" id="266138at2759"/>
<dbReference type="PhylomeDB" id="Q05A62"/>
<dbReference type="TreeFam" id="TF323974"/>
<dbReference type="BioGRID-ORCS" id="105000">
    <property type="hits" value="0 hits in 77 CRISPR screens"/>
</dbReference>
<dbReference type="ChiTaRS" id="Dnal1">
    <property type="organism name" value="mouse"/>
</dbReference>
<dbReference type="PRO" id="PR:Q05A62"/>
<dbReference type="Proteomes" id="UP000000589">
    <property type="component" value="Chromosome 12"/>
</dbReference>
<dbReference type="RNAct" id="Q05A62">
    <property type="molecule type" value="protein"/>
</dbReference>
<dbReference type="Bgee" id="ENSMUSG00000042523">
    <property type="expression patterns" value="Expressed in otolith organ and 217 other cell types or tissues"/>
</dbReference>
<dbReference type="ExpressionAtlas" id="Q05A62">
    <property type="expression patterns" value="baseline and differential"/>
</dbReference>
<dbReference type="GO" id="GO:0005874">
    <property type="term" value="C:microtubule"/>
    <property type="evidence" value="ECO:0007669"/>
    <property type="project" value="UniProtKB-KW"/>
</dbReference>
<dbReference type="GO" id="GO:0036157">
    <property type="term" value="C:outer dynein arm"/>
    <property type="evidence" value="ECO:0000247"/>
    <property type="project" value="MGI"/>
</dbReference>
<dbReference type="GO" id="GO:0043014">
    <property type="term" value="F:alpha-tubulin binding"/>
    <property type="evidence" value="ECO:0007669"/>
    <property type="project" value="Ensembl"/>
</dbReference>
<dbReference type="GO" id="GO:0045504">
    <property type="term" value="F:dynein heavy chain binding"/>
    <property type="evidence" value="ECO:0007669"/>
    <property type="project" value="Ensembl"/>
</dbReference>
<dbReference type="GO" id="GO:0036158">
    <property type="term" value="P:outer dynein arm assembly"/>
    <property type="evidence" value="ECO:0007669"/>
    <property type="project" value="Ensembl"/>
</dbReference>
<dbReference type="FunFam" id="3.80.10.10:FF:000049">
    <property type="entry name" value="Dynein light chain 1"/>
    <property type="match status" value="1"/>
</dbReference>
<dbReference type="Gene3D" id="3.80.10.10">
    <property type="entry name" value="Ribonuclease Inhibitor"/>
    <property type="match status" value="1"/>
</dbReference>
<dbReference type="InterPro" id="IPR001611">
    <property type="entry name" value="Leu-rich_rpt"/>
</dbReference>
<dbReference type="InterPro" id="IPR025875">
    <property type="entry name" value="Leu-rich_rpt_4"/>
</dbReference>
<dbReference type="InterPro" id="IPR032675">
    <property type="entry name" value="LRR_dom_sf"/>
</dbReference>
<dbReference type="PANTHER" id="PTHR15454:SF33">
    <property type="entry name" value="DYNEIN AXONEMAL LIGHT CHAIN 1"/>
    <property type="match status" value="1"/>
</dbReference>
<dbReference type="PANTHER" id="PTHR15454">
    <property type="entry name" value="NISCHARIN RELATED"/>
    <property type="match status" value="1"/>
</dbReference>
<dbReference type="Pfam" id="PF12799">
    <property type="entry name" value="LRR_4"/>
    <property type="match status" value="2"/>
</dbReference>
<dbReference type="SMART" id="SM00365">
    <property type="entry name" value="LRR_SD22"/>
    <property type="match status" value="4"/>
</dbReference>
<dbReference type="SUPFAM" id="SSF52058">
    <property type="entry name" value="L domain-like"/>
    <property type="match status" value="1"/>
</dbReference>
<dbReference type="PROSITE" id="PS51450">
    <property type="entry name" value="LRR"/>
    <property type="match status" value="4"/>
</dbReference>
<name>DNAL1_MOUSE</name>
<accession>Q05A62</accession>
<accession>A0JLX1</accession>
<accession>Q9DAH9</accession>
<comment type="function">
    <text evidence="1 2">Part of the multisubunit axonemal ATPase complexes that generate the force for cilia motility and govern beat frequency (By similarity). Component of the outer arm dynein (ODA). May be involved in a mechanosensory feedback mechanism controlling ODA activity based on external conformational cues by tethering the outer arm dynein heavy chain (DNAH5) to the microtubule within the axoneme (By similarity). Important for ciliary function in the airways and for the function of the cilia that produce the nodal flow essential for the determination of the left-right asymmetry (By similarity).</text>
</comment>
<comment type="subunit">
    <text evidence="1">Interacts with ZMYND10 (via C-terminus). Interacts with DNAH5, a outer arm dynein heavy chain. Interacts with tubulin located within the A-tubule of the outer doublets in a ATP-independent manner.</text>
</comment>
<comment type="subcellular location">
    <subcellularLocation>
        <location evidence="1">Cytoplasm</location>
        <location evidence="1">Cytoskeleton</location>
        <location evidence="1">Cilium axoneme</location>
    </subcellularLocation>
</comment>
<comment type="alternative products">
    <event type="alternative splicing"/>
    <isoform>
        <id>Q05A62-1</id>
        <name>1</name>
        <sequence type="displayed"/>
    </isoform>
    <isoform>
        <id>Q05A62-2</id>
        <name>2</name>
        <sequence type="described" ref="VSP_023984 VSP_023983"/>
    </isoform>
    <isoform>
        <id>Q05A62-3</id>
        <name>3</name>
        <sequence type="described" ref="VSP_023985"/>
    </isoform>
</comment>
<comment type="tissue specificity">
    <text evidence="3">Expressed in the respiratory epithelium of the upper airways and the ependymal cells lining the brain ventricles.</text>
</comment>
<comment type="miscellaneous">
    <text evidence="2">Outer (ODAs) and inner (IDAs) dynein arms contain the molecular motors that generate the force to move cilia by ATP-dependent reactions. There are two mechanosensory systems that monitor and respond to the mechanical state (curvature) of the axoneme. One system involves the central pair microtubule complex and radial spokes and the second system involves the outer dynein arms.</text>
</comment>
<comment type="similarity">
    <text evidence="6">Belongs to the dynein light chain LC1-type family.</text>
</comment>
<comment type="sequence caution" evidence="6">
    <conflict type="erroneous initiation">
        <sequence resource="EMBL-CDS" id="AAI25395"/>
    </conflict>
    <text>Truncated N-terminus.</text>
</comment>
<keyword id="KW-0007">Acetylation</keyword>
<keyword id="KW-0025">Alternative splicing</keyword>
<keyword id="KW-0966">Cell projection</keyword>
<keyword id="KW-0963">Cytoplasm</keyword>
<keyword id="KW-0206">Cytoskeleton</keyword>
<keyword id="KW-0243">Dynein</keyword>
<keyword id="KW-0433">Leucine-rich repeat</keyword>
<keyword id="KW-0493">Microtubule</keyword>
<keyword id="KW-0505">Motor protein</keyword>
<keyword id="KW-0597">Phosphoprotein</keyword>
<keyword id="KW-1185">Reference proteome</keyword>
<keyword id="KW-0677">Repeat</keyword>
<evidence type="ECO:0000250" key="1">
    <source>
        <dbReference type="UniProtKB" id="Q4LDG9"/>
    </source>
</evidence>
<evidence type="ECO:0000250" key="2">
    <source>
        <dbReference type="UniProtKB" id="Q9XHH2"/>
    </source>
</evidence>
<evidence type="ECO:0000269" key="3">
    <source>
    </source>
</evidence>
<evidence type="ECO:0000303" key="4">
    <source>
    </source>
</evidence>
<evidence type="ECO:0000303" key="5">
    <source>
    </source>
</evidence>
<evidence type="ECO:0000305" key="6"/>
<evidence type="ECO:0007744" key="7">
    <source>
    </source>
</evidence>
<organism>
    <name type="scientific">Mus musculus</name>
    <name type="common">Mouse</name>
    <dbReference type="NCBI Taxonomy" id="10090"/>
    <lineage>
        <taxon>Eukaryota</taxon>
        <taxon>Metazoa</taxon>
        <taxon>Chordata</taxon>
        <taxon>Craniata</taxon>
        <taxon>Vertebrata</taxon>
        <taxon>Euteleostomi</taxon>
        <taxon>Mammalia</taxon>
        <taxon>Eutheria</taxon>
        <taxon>Euarchontoglires</taxon>
        <taxon>Glires</taxon>
        <taxon>Rodentia</taxon>
        <taxon>Myomorpha</taxon>
        <taxon>Muroidea</taxon>
        <taxon>Muridae</taxon>
        <taxon>Murinae</taxon>
        <taxon>Mus</taxon>
        <taxon>Mus</taxon>
    </lineage>
</organism>
<reference key="1">
    <citation type="journal article" date="2005" name="Science">
        <title>The transcriptional landscape of the mammalian genome.</title>
        <authorList>
            <person name="Carninci P."/>
            <person name="Kasukawa T."/>
            <person name="Katayama S."/>
            <person name="Gough J."/>
            <person name="Frith M.C."/>
            <person name="Maeda N."/>
            <person name="Oyama R."/>
            <person name="Ravasi T."/>
            <person name="Lenhard B."/>
            <person name="Wells C."/>
            <person name="Kodzius R."/>
            <person name="Shimokawa K."/>
            <person name="Bajic V.B."/>
            <person name="Brenner S.E."/>
            <person name="Batalov S."/>
            <person name="Forrest A.R."/>
            <person name="Zavolan M."/>
            <person name="Davis M.J."/>
            <person name="Wilming L.G."/>
            <person name="Aidinis V."/>
            <person name="Allen J.E."/>
            <person name="Ambesi-Impiombato A."/>
            <person name="Apweiler R."/>
            <person name="Aturaliya R.N."/>
            <person name="Bailey T.L."/>
            <person name="Bansal M."/>
            <person name="Baxter L."/>
            <person name="Beisel K.W."/>
            <person name="Bersano T."/>
            <person name="Bono H."/>
            <person name="Chalk A.M."/>
            <person name="Chiu K.P."/>
            <person name="Choudhary V."/>
            <person name="Christoffels A."/>
            <person name="Clutterbuck D.R."/>
            <person name="Crowe M.L."/>
            <person name="Dalla E."/>
            <person name="Dalrymple B.P."/>
            <person name="de Bono B."/>
            <person name="Della Gatta G."/>
            <person name="di Bernardo D."/>
            <person name="Down T."/>
            <person name="Engstrom P."/>
            <person name="Fagiolini M."/>
            <person name="Faulkner G."/>
            <person name="Fletcher C.F."/>
            <person name="Fukushima T."/>
            <person name="Furuno M."/>
            <person name="Futaki S."/>
            <person name="Gariboldi M."/>
            <person name="Georgii-Hemming P."/>
            <person name="Gingeras T.R."/>
            <person name="Gojobori T."/>
            <person name="Green R.E."/>
            <person name="Gustincich S."/>
            <person name="Harbers M."/>
            <person name="Hayashi Y."/>
            <person name="Hensch T.K."/>
            <person name="Hirokawa N."/>
            <person name="Hill D."/>
            <person name="Huminiecki L."/>
            <person name="Iacono M."/>
            <person name="Ikeo K."/>
            <person name="Iwama A."/>
            <person name="Ishikawa T."/>
            <person name="Jakt M."/>
            <person name="Kanapin A."/>
            <person name="Katoh M."/>
            <person name="Kawasawa Y."/>
            <person name="Kelso J."/>
            <person name="Kitamura H."/>
            <person name="Kitano H."/>
            <person name="Kollias G."/>
            <person name="Krishnan S.P."/>
            <person name="Kruger A."/>
            <person name="Kummerfeld S.K."/>
            <person name="Kurochkin I.V."/>
            <person name="Lareau L.F."/>
            <person name="Lazarevic D."/>
            <person name="Lipovich L."/>
            <person name="Liu J."/>
            <person name="Liuni S."/>
            <person name="McWilliam S."/>
            <person name="Madan Babu M."/>
            <person name="Madera M."/>
            <person name="Marchionni L."/>
            <person name="Matsuda H."/>
            <person name="Matsuzawa S."/>
            <person name="Miki H."/>
            <person name="Mignone F."/>
            <person name="Miyake S."/>
            <person name="Morris K."/>
            <person name="Mottagui-Tabar S."/>
            <person name="Mulder N."/>
            <person name="Nakano N."/>
            <person name="Nakauchi H."/>
            <person name="Ng P."/>
            <person name="Nilsson R."/>
            <person name="Nishiguchi S."/>
            <person name="Nishikawa S."/>
            <person name="Nori F."/>
            <person name="Ohara O."/>
            <person name="Okazaki Y."/>
            <person name="Orlando V."/>
            <person name="Pang K.C."/>
            <person name="Pavan W.J."/>
            <person name="Pavesi G."/>
            <person name="Pesole G."/>
            <person name="Petrovsky N."/>
            <person name="Piazza S."/>
            <person name="Reed J."/>
            <person name="Reid J.F."/>
            <person name="Ring B.Z."/>
            <person name="Ringwald M."/>
            <person name="Rost B."/>
            <person name="Ruan Y."/>
            <person name="Salzberg S.L."/>
            <person name="Sandelin A."/>
            <person name="Schneider C."/>
            <person name="Schoenbach C."/>
            <person name="Sekiguchi K."/>
            <person name="Semple C.A."/>
            <person name="Seno S."/>
            <person name="Sessa L."/>
            <person name="Sheng Y."/>
            <person name="Shibata Y."/>
            <person name="Shimada H."/>
            <person name="Shimada K."/>
            <person name="Silva D."/>
            <person name="Sinclair B."/>
            <person name="Sperling S."/>
            <person name="Stupka E."/>
            <person name="Sugiura K."/>
            <person name="Sultana R."/>
            <person name="Takenaka Y."/>
            <person name="Taki K."/>
            <person name="Tammoja K."/>
            <person name="Tan S.L."/>
            <person name="Tang S."/>
            <person name="Taylor M.S."/>
            <person name="Tegner J."/>
            <person name="Teichmann S.A."/>
            <person name="Ueda H.R."/>
            <person name="van Nimwegen E."/>
            <person name="Verardo R."/>
            <person name="Wei C.L."/>
            <person name="Yagi K."/>
            <person name="Yamanishi H."/>
            <person name="Zabarovsky E."/>
            <person name="Zhu S."/>
            <person name="Zimmer A."/>
            <person name="Hide W."/>
            <person name="Bult C."/>
            <person name="Grimmond S.M."/>
            <person name="Teasdale R.D."/>
            <person name="Liu E.T."/>
            <person name="Brusic V."/>
            <person name="Quackenbush J."/>
            <person name="Wahlestedt C."/>
            <person name="Mattick J.S."/>
            <person name="Hume D.A."/>
            <person name="Kai C."/>
            <person name="Sasaki D."/>
            <person name="Tomaru Y."/>
            <person name="Fukuda S."/>
            <person name="Kanamori-Katayama M."/>
            <person name="Suzuki M."/>
            <person name="Aoki J."/>
            <person name="Arakawa T."/>
            <person name="Iida J."/>
            <person name="Imamura K."/>
            <person name="Itoh M."/>
            <person name="Kato T."/>
            <person name="Kawaji H."/>
            <person name="Kawagashira N."/>
            <person name="Kawashima T."/>
            <person name="Kojima M."/>
            <person name="Kondo S."/>
            <person name="Konno H."/>
            <person name="Nakano K."/>
            <person name="Ninomiya N."/>
            <person name="Nishio T."/>
            <person name="Okada M."/>
            <person name="Plessy C."/>
            <person name="Shibata K."/>
            <person name="Shiraki T."/>
            <person name="Suzuki S."/>
            <person name="Tagami M."/>
            <person name="Waki K."/>
            <person name="Watahiki A."/>
            <person name="Okamura-Oho Y."/>
            <person name="Suzuki H."/>
            <person name="Kawai J."/>
            <person name="Hayashizaki Y."/>
        </authorList>
    </citation>
    <scope>NUCLEOTIDE SEQUENCE [LARGE SCALE MRNA] (ISOFORM 3)</scope>
    <source>
        <strain>C57BL/6J</strain>
        <tissue>Testis</tissue>
    </source>
</reference>
<reference key="2">
    <citation type="journal article" date="2004" name="Genome Res.">
        <title>The status, quality, and expansion of the NIH full-length cDNA project: the Mammalian Gene Collection (MGC).</title>
        <authorList>
            <consortium name="The MGC Project Team"/>
        </authorList>
    </citation>
    <scope>NUCLEOTIDE SEQUENCE [LARGE SCALE MRNA] (ISOFORMS 1; 2 AND 3)</scope>
    <source>
        <tissue>Brain</tissue>
    </source>
</reference>
<reference key="3">
    <citation type="journal article" date="2005" name="Am. J. Respir. Cell Mol. Biol.">
        <title>Identification and analysis of axonemal dynein light chain 1 in primary ciliary dyskinesia patients.</title>
        <authorList>
            <person name="Horvath J."/>
            <person name="Fliegauf M."/>
            <person name="Olbrich H."/>
            <person name="Kispert A."/>
            <person name="King S.M."/>
            <person name="Mitchison H."/>
            <person name="Zariwala M.A."/>
            <person name="Knowles M.R."/>
            <person name="Sudbrak R."/>
            <person name="Fekete G."/>
            <person name="Neesen J."/>
            <person name="Reinhardt R."/>
            <person name="Omran H."/>
        </authorList>
    </citation>
    <scope>IDENTIFICATION</scope>
    <scope>TISSUE SPECIFICITY</scope>
</reference>
<reference key="4">
    <citation type="journal article" date="2010" name="Cell">
        <title>A tissue-specific atlas of mouse protein phosphorylation and expression.</title>
        <authorList>
            <person name="Huttlin E.L."/>
            <person name="Jedrychowski M.P."/>
            <person name="Elias J.E."/>
            <person name="Goswami T."/>
            <person name="Rad R."/>
            <person name="Beausoleil S.A."/>
            <person name="Villen J."/>
            <person name="Haas W."/>
            <person name="Sowa M.E."/>
            <person name="Gygi S.P."/>
        </authorList>
    </citation>
    <scope>PHOSPHORYLATION [LARGE SCALE ANALYSIS] AT SER-56</scope>
    <scope>IDENTIFICATION BY MASS SPECTROMETRY [LARGE SCALE ANALYSIS]</scope>
    <source>
        <tissue>Brain</tissue>
        <tissue>Lung</tissue>
        <tissue>Testis</tissue>
    </source>
</reference>
<protein>
    <recommendedName>
        <fullName>Dynein axonemal light chain 1</fullName>
    </recommendedName>
</protein>
<proteinExistence type="evidence at protein level"/>
<feature type="initiator methionine" description="Removed" evidence="1">
    <location>
        <position position="1"/>
    </location>
</feature>
<feature type="chain" id="PRO_0000281131" description="Dynein axonemal light chain 1">
    <location>
        <begin position="2"/>
        <end position="190"/>
    </location>
</feature>
<feature type="repeat" description="LRR 1">
    <location>
        <begin position="49"/>
        <end position="70"/>
    </location>
</feature>
<feature type="repeat" description="LRR 2">
    <location>
        <begin position="71"/>
        <end position="92"/>
    </location>
</feature>
<feature type="repeat" description="LRR 3">
    <location>
        <begin position="94"/>
        <end position="115"/>
    </location>
</feature>
<feature type="repeat" description="LRR 4">
    <location>
        <begin position="116"/>
        <end position="137"/>
    </location>
</feature>
<feature type="domain" description="LRRCT">
    <location>
        <begin position="150"/>
        <end position="190"/>
    </location>
</feature>
<feature type="modified residue" description="N-acetylalanine" evidence="1">
    <location>
        <position position="2"/>
    </location>
</feature>
<feature type="modified residue" description="Phosphoserine" evidence="7">
    <location>
        <position position="56"/>
    </location>
</feature>
<feature type="splice variant" id="VSP_023985" description="In isoform 3." evidence="4 5">
    <location>
        <begin position="1"/>
        <end position="39"/>
    </location>
</feature>
<feature type="splice variant" id="VSP_023984" description="In isoform 2." evidence="4">
    <location>
        <begin position="2"/>
        <end position="14"/>
    </location>
</feature>
<feature type="splice variant" id="VSP_023983" description="In isoform 2." evidence="4">
    <original>E</original>
    <variation>M</variation>
    <location>
        <position position="15"/>
    </location>
</feature>
<feature type="sequence conflict" description="In Ref. 1; BAB24259." evidence="6" ref="1">
    <original>F</original>
    <variation>L</variation>
    <location>
        <position position="147"/>
    </location>
</feature>